<organism>
    <name type="scientific">Rattus norvegicus</name>
    <name type="common">Rat</name>
    <dbReference type="NCBI Taxonomy" id="10116"/>
    <lineage>
        <taxon>Eukaryota</taxon>
        <taxon>Metazoa</taxon>
        <taxon>Chordata</taxon>
        <taxon>Craniata</taxon>
        <taxon>Vertebrata</taxon>
        <taxon>Euteleostomi</taxon>
        <taxon>Mammalia</taxon>
        <taxon>Eutheria</taxon>
        <taxon>Euarchontoglires</taxon>
        <taxon>Glires</taxon>
        <taxon>Rodentia</taxon>
        <taxon>Myomorpha</taxon>
        <taxon>Muroidea</taxon>
        <taxon>Muridae</taxon>
        <taxon>Murinae</taxon>
        <taxon>Rattus</taxon>
    </lineage>
</organism>
<evidence type="ECO:0000250" key="1"/>
<evidence type="ECO:0000250" key="2">
    <source>
        <dbReference type="UniProtKB" id="P63239"/>
    </source>
</evidence>
<evidence type="ECO:0000255" key="3"/>
<evidence type="ECO:0000255" key="4">
    <source>
        <dbReference type="PROSITE-ProRule" id="PRU01173"/>
    </source>
</evidence>
<evidence type="ECO:0000255" key="5">
    <source>
        <dbReference type="PROSITE-ProRule" id="PRU01240"/>
    </source>
</evidence>
<evidence type="ECO:0000256" key="6">
    <source>
        <dbReference type="SAM" id="MobiDB-lite"/>
    </source>
</evidence>
<evidence type="ECO:0000305" key="7"/>
<proteinExistence type="evidence at transcript level"/>
<comment type="function">
    <text evidence="2">Involved in the processing of hormone and other protein precursors at sites comprised of pairs of basic amino acid residues. Substrates include POMC, renin, enkephalin, dynorphin, somatostatin, insulin and AGRP.</text>
</comment>
<comment type="catalytic activity">
    <reaction>
        <text>Release of protein hormones, neuropeptides and renin from their precursors, generally by hydrolysis of -Lys-Arg-|- bonds.</text>
        <dbReference type="EC" id="3.4.21.93"/>
    </reaction>
</comment>
<comment type="cofactor">
    <cofactor>
        <name>Ca(2+)</name>
        <dbReference type="ChEBI" id="CHEBI:29108"/>
    </cofactor>
</comment>
<comment type="subcellular location">
    <subcellularLocation>
        <location>Cytoplasmic vesicle</location>
        <location>Secretory vesicle</location>
    </subcellularLocation>
    <text>Localized in the secretion granules.</text>
</comment>
<comment type="similarity">
    <text evidence="7">Belongs to the peptidase S8 family. Furin subfamily.</text>
</comment>
<protein>
    <recommendedName>
        <fullName>Neuroendocrine convertase 1</fullName>
        <shortName>NEC 1</shortName>
        <ecNumber>3.4.21.93</ecNumber>
    </recommendedName>
    <alternativeName>
        <fullName>Prohormone convertase 1</fullName>
    </alternativeName>
    <alternativeName>
        <fullName>Proprotein convertase 1</fullName>
        <shortName>PC1</shortName>
    </alternativeName>
</protein>
<accession>P28840</accession>
<gene>
    <name type="primary">Pcsk1</name>
    <name type="synonym">Bdp</name>
    <name type="synonym">Nec-1</name>
    <name type="synonym">Nec1</name>
</gene>
<dbReference type="EC" id="3.4.21.93"/>
<dbReference type="EMBL" id="M76705">
    <property type="protein sequence ID" value="AAA40945.1"/>
    <property type="molecule type" value="mRNA"/>
</dbReference>
<dbReference type="EMBL" id="M83745">
    <property type="protein sequence ID" value="AAA41476.1"/>
    <property type="molecule type" value="mRNA"/>
</dbReference>
<dbReference type="PIR" id="A41556">
    <property type="entry name" value="KXRTC1"/>
</dbReference>
<dbReference type="RefSeq" id="NP_058787.1">
    <property type="nucleotide sequence ID" value="NM_017091.2"/>
</dbReference>
<dbReference type="SMR" id="P28840"/>
<dbReference type="FunCoup" id="P28840">
    <property type="interactions" value="62"/>
</dbReference>
<dbReference type="STRING" id="10116.ENSRNOP00000015185"/>
<dbReference type="MEROPS" id="S08.072"/>
<dbReference type="GlyCosmos" id="P28840">
    <property type="glycosylation" value="3 sites, No reported glycans"/>
</dbReference>
<dbReference type="GlyGen" id="P28840">
    <property type="glycosylation" value="3 sites"/>
</dbReference>
<dbReference type="PhosphoSitePlus" id="P28840"/>
<dbReference type="PaxDb" id="10116-ENSRNOP00000015185"/>
<dbReference type="Ensembl" id="ENSRNOT00000015185.4">
    <property type="protein sequence ID" value="ENSRNOP00000015185.2"/>
    <property type="gene ID" value="ENSRNOG00000011107.4"/>
</dbReference>
<dbReference type="GeneID" id="25204"/>
<dbReference type="KEGG" id="rno:25204"/>
<dbReference type="UCSC" id="RGD:3272">
    <property type="organism name" value="rat"/>
</dbReference>
<dbReference type="AGR" id="RGD:3272"/>
<dbReference type="CTD" id="5122"/>
<dbReference type="RGD" id="3272">
    <property type="gene designation" value="Pcsk1"/>
</dbReference>
<dbReference type="eggNOG" id="KOG3525">
    <property type="taxonomic scope" value="Eukaryota"/>
</dbReference>
<dbReference type="GeneTree" id="ENSGT00940000157385"/>
<dbReference type="HOGENOM" id="CLU_002976_4_1_1"/>
<dbReference type="InParanoid" id="P28840"/>
<dbReference type="OMA" id="NDPMWSQ"/>
<dbReference type="OrthoDB" id="300641at2759"/>
<dbReference type="PhylomeDB" id="P28840"/>
<dbReference type="TreeFam" id="TF314277"/>
<dbReference type="Reactome" id="R-RNO-209952">
    <property type="pathway name" value="Peptide hormone biosynthesis"/>
</dbReference>
<dbReference type="Reactome" id="R-RNO-422085">
    <property type="pathway name" value="Synthesis, secretion, and deacylation of Ghrelin"/>
</dbReference>
<dbReference type="PRO" id="PR:P28840"/>
<dbReference type="Proteomes" id="UP000002494">
    <property type="component" value="Chromosome 2"/>
</dbReference>
<dbReference type="Bgee" id="ENSRNOG00000011107">
    <property type="expression patterns" value="Expressed in frontal cortex and 12 other cell types or tissues"/>
</dbReference>
<dbReference type="GO" id="GO:0043679">
    <property type="term" value="C:axon terminus"/>
    <property type="evidence" value="ECO:0000314"/>
    <property type="project" value="RGD"/>
</dbReference>
<dbReference type="GO" id="GO:0030425">
    <property type="term" value="C:dendrite"/>
    <property type="evidence" value="ECO:0000314"/>
    <property type="project" value="RGD"/>
</dbReference>
<dbReference type="GO" id="GO:0005615">
    <property type="term" value="C:extracellular space"/>
    <property type="evidence" value="ECO:0000314"/>
    <property type="project" value="RGD"/>
</dbReference>
<dbReference type="GO" id="GO:0016020">
    <property type="term" value="C:membrane"/>
    <property type="evidence" value="ECO:0000318"/>
    <property type="project" value="GO_Central"/>
</dbReference>
<dbReference type="GO" id="GO:0043005">
    <property type="term" value="C:neuron projection"/>
    <property type="evidence" value="ECO:0000318"/>
    <property type="project" value="GO_Central"/>
</dbReference>
<dbReference type="GO" id="GO:0043025">
    <property type="term" value="C:neuronal cell body"/>
    <property type="evidence" value="ECO:0000314"/>
    <property type="project" value="RGD"/>
</dbReference>
<dbReference type="GO" id="GO:0043204">
    <property type="term" value="C:perikaryon"/>
    <property type="evidence" value="ECO:0000314"/>
    <property type="project" value="RGD"/>
</dbReference>
<dbReference type="GO" id="GO:0048471">
    <property type="term" value="C:perinuclear region of cytoplasm"/>
    <property type="evidence" value="ECO:0000314"/>
    <property type="project" value="RGD"/>
</dbReference>
<dbReference type="GO" id="GO:0030141">
    <property type="term" value="C:secretory granule"/>
    <property type="evidence" value="ECO:0000314"/>
    <property type="project" value="RGD"/>
</dbReference>
<dbReference type="GO" id="GO:0034774">
    <property type="term" value="C:secretory granule lumen"/>
    <property type="evidence" value="ECO:0000304"/>
    <property type="project" value="Reactome"/>
</dbReference>
<dbReference type="GO" id="GO:0005802">
    <property type="term" value="C:trans-Golgi network"/>
    <property type="evidence" value="ECO:0000314"/>
    <property type="project" value="RGD"/>
</dbReference>
<dbReference type="GO" id="GO:0030133">
    <property type="term" value="C:transport vesicle"/>
    <property type="evidence" value="ECO:0007669"/>
    <property type="project" value="UniProtKB-SubCell"/>
</dbReference>
<dbReference type="GO" id="GO:0004175">
    <property type="term" value="F:endopeptidase activity"/>
    <property type="evidence" value="ECO:0000314"/>
    <property type="project" value="RGD"/>
</dbReference>
<dbReference type="GO" id="GO:0042802">
    <property type="term" value="F:identical protein binding"/>
    <property type="evidence" value="ECO:0000266"/>
    <property type="project" value="RGD"/>
</dbReference>
<dbReference type="GO" id="GO:0004252">
    <property type="term" value="F:serine-type endopeptidase activity"/>
    <property type="evidence" value="ECO:0000266"/>
    <property type="project" value="RGD"/>
</dbReference>
<dbReference type="GO" id="GO:0030070">
    <property type="term" value="P:insulin processing"/>
    <property type="evidence" value="ECO:0000266"/>
    <property type="project" value="RGD"/>
</dbReference>
<dbReference type="GO" id="GO:0022008">
    <property type="term" value="P:neurogenesis"/>
    <property type="evidence" value="ECO:0000270"/>
    <property type="project" value="RGD"/>
</dbReference>
<dbReference type="GO" id="GO:0031016">
    <property type="term" value="P:pancreas development"/>
    <property type="evidence" value="ECO:0000270"/>
    <property type="project" value="RGD"/>
</dbReference>
<dbReference type="GO" id="GO:0043043">
    <property type="term" value="P:peptide biosynthetic process"/>
    <property type="evidence" value="ECO:0000266"/>
    <property type="project" value="RGD"/>
</dbReference>
<dbReference type="GO" id="GO:0016486">
    <property type="term" value="P:peptide hormone processing"/>
    <property type="evidence" value="ECO:0000314"/>
    <property type="project" value="RGD"/>
</dbReference>
<dbReference type="GO" id="GO:0021983">
    <property type="term" value="P:pituitary gland development"/>
    <property type="evidence" value="ECO:0000270"/>
    <property type="project" value="RGD"/>
</dbReference>
<dbReference type="GO" id="GO:0050714">
    <property type="term" value="P:positive regulation of protein secretion"/>
    <property type="evidence" value="ECO:0000314"/>
    <property type="project" value="RGD"/>
</dbReference>
<dbReference type="GO" id="GO:0016540">
    <property type="term" value="P:protein autoprocessing"/>
    <property type="evidence" value="ECO:0000315"/>
    <property type="project" value="RGD"/>
</dbReference>
<dbReference type="GO" id="GO:0016485">
    <property type="term" value="P:protein processing"/>
    <property type="evidence" value="ECO:0000315"/>
    <property type="project" value="RGD"/>
</dbReference>
<dbReference type="GO" id="GO:0048678">
    <property type="term" value="P:response to axon injury"/>
    <property type="evidence" value="ECO:0000270"/>
    <property type="project" value="RGD"/>
</dbReference>
<dbReference type="GO" id="GO:0051592">
    <property type="term" value="P:response to calcium ion"/>
    <property type="evidence" value="ECO:0000270"/>
    <property type="project" value="RGD"/>
</dbReference>
<dbReference type="GO" id="GO:0010157">
    <property type="term" value="P:response to chlorate"/>
    <property type="evidence" value="ECO:0000270"/>
    <property type="project" value="RGD"/>
</dbReference>
<dbReference type="GO" id="GO:0070542">
    <property type="term" value="P:response to fatty acid"/>
    <property type="evidence" value="ECO:0000270"/>
    <property type="project" value="RGD"/>
</dbReference>
<dbReference type="GO" id="GO:1904321">
    <property type="term" value="P:response to forskolin"/>
    <property type="evidence" value="ECO:0000270"/>
    <property type="project" value="RGD"/>
</dbReference>
<dbReference type="GO" id="GO:0051384">
    <property type="term" value="P:response to glucocorticoid"/>
    <property type="evidence" value="ECO:0000270"/>
    <property type="project" value="RGD"/>
</dbReference>
<dbReference type="GO" id="GO:0009749">
    <property type="term" value="P:response to glucose"/>
    <property type="evidence" value="ECO:0000270"/>
    <property type="project" value="RGD"/>
</dbReference>
<dbReference type="GO" id="GO:0070555">
    <property type="term" value="P:response to interleukin-1"/>
    <property type="evidence" value="ECO:0000270"/>
    <property type="project" value="RGD"/>
</dbReference>
<dbReference type="GO" id="GO:0032496">
    <property type="term" value="P:response to lipopolysaccharide"/>
    <property type="evidence" value="ECO:0000270"/>
    <property type="project" value="RGD"/>
</dbReference>
<dbReference type="GO" id="GO:0031667">
    <property type="term" value="P:response to nutrient levels"/>
    <property type="evidence" value="ECO:0000270"/>
    <property type="project" value="RGD"/>
</dbReference>
<dbReference type="GO" id="GO:0043434">
    <property type="term" value="P:response to peptide hormone"/>
    <property type="evidence" value="ECO:0000270"/>
    <property type="project" value="RGD"/>
</dbReference>
<dbReference type="GO" id="GO:0009410">
    <property type="term" value="P:response to xenobiotic stimulus"/>
    <property type="evidence" value="ECO:0000270"/>
    <property type="project" value="RGD"/>
</dbReference>
<dbReference type="CDD" id="cd04059">
    <property type="entry name" value="Peptidases_S8_Protein_convertases_Kexins_Furin-like"/>
    <property type="match status" value="1"/>
</dbReference>
<dbReference type="FunFam" id="6.10.250.3320:FF:000001">
    <property type="entry name" value="neuroendocrine convertase 1"/>
    <property type="match status" value="1"/>
</dbReference>
<dbReference type="FunFam" id="2.60.120.260:FF:000054">
    <property type="entry name" value="Proprotein convertase subtilisin/kexin type 1"/>
    <property type="match status" value="1"/>
</dbReference>
<dbReference type="FunFam" id="3.30.70.850:FF:000001">
    <property type="entry name" value="Proprotein convertase subtilisin/kexin type 5"/>
    <property type="match status" value="1"/>
</dbReference>
<dbReference type="FunFam" id="3.40.50.200:FF:000010">
    <property type="entry name" value="Putative neuroendocrine convertase 1"/>
    <property type="match status" value="1"/>
</dbReference>
<dbReference type="Gene3D" id="6.10.250.3320">
    <property type="match status" value="1"/>
</dbReference>
<dbReference type="Gene3D" id="2.60.120.260">
    <property type="entry name" value="Galactose-binding domain-like"/>
    <property type="match status" value="1"/>
</dbReference>
<dbReference type="Gene3D" id="3.30.70.850">
    <property type="entry name" value="Peptidase S8, pro-domain"/>
    <property type="match status" value="1"/>
</dbReference>
<dbReference type="Gene3D" id="3.40.50.200">
    <property type="entry name" value="Peptidase S8/S53 domain"/>
    <property type="match status" value="1"/>
</dbReference>
<dbReference type="InterPro" id="IPR008979">
    <property type="entry name" value="Galactose-bd-like_sf"/>
</dbReference>
<dbReference type="InterPro" id="IPR034182">
    <property type="entry name" value="Kexin/furin"/>
</dbReference>
<dbReference type="InterPro" id="IPR002884">
    <property type="entry name" value="P_dom"/>
</dbReference>
<dbReference type="InterPro" id="IPR000209">
    <property type="entry name" value="Peptidase_S8/S53_dom"/>
</dbReference>
<dbReference type="InterPro" id="IPR036852">
    <property type="entry name" value="Peptidase_S8/S53_dom_sf"/>
</dbReference>
<dbReference type="InterPro" id="IPR023827">
    <property type="entry name" value="Peptidase_S8_Asp-AS"/>
</dbReference>
<dbReference type="InterPro" id="IPR022398">
    <property type="entry name" value="Peptidase_S8_His-AS"/>
</dbReference>
<dbReference type="InterPro" id="IPR023828">
    <property type="entry name" value="Peptidase_S8_Ser-AS"/>
</dbReference>
<dbReference type="InterPro" id="IPR015500">
    <property type="entry name" value="Peptidase_S8_subtilisin-rel"/>
</dbReference>
<dbReference type="InterPro" id="IPR022005">
    <property type="entry name" value="Proho_convert"/>
</dbReference>
<dbReference type="InterPro" id="IPR032815">
    <property type="entry name" value="S8_pro-domain"/>
</dbReference>
<dbReference type="InterPro" id="IPR038466">
    <property type="entry name" value="S8_pro-domain_sf"/>
</dbReference>
<dbReference type="PANTHER" id="PTHR42884:SF14">
    <property type="entry name" value="NEUROENDOCRINE CONVERTASE 1"/>
    <property type="match status" value="1"/>
</dbReference>
<dbReference type="PANTHER" id="PTHR42884">
    <property type="entry name" value="PROPROTEIN CONVERTASE SUBTILISIN/KEXIN-RELATED"/>
    <property type="match status" value="1"/>
</dbReference>
<dbReference type="Pfam" id="PF01483">
    <property type="entry name" value="P_proprotein"/>
    <property type="match status" value="1"/>
</dbReference>
<dbReference type="Pfam" id="PF00082">
    <property type="entry name" value="Peptidase_S8"/>
    <property type="match status" value="1"/>
</dbReference>
<dbReference type="Pfam" id="PF12177">
    <property type="entry name" value="Proho_convert"/>
    <property type="match status" value="1"/>
</dbReference>
<dbReference type="Pfam" id="PF16470">
    <property type="entry name" value="S8_pro-domain"/>
    <property type="match status" value="1"/>
</dbReference>
<dbReference type="PRINTS" id="PR00723">
    <property type="entry name" value="SUBTILISIN"/>
</dbReference>
<dbReference type="SUPFAM" id="SSF49785">
    <property type="entry name" value="Galactose-binding domain-like"/>
    <property type="match status" value="1"/>
</dbReference>
<dbReference type="SUPFAM" id="SSF54897">
    <property type="entry name" value="Protease propeptides/inhibitors"/>
    <property type="match status" value="1"/>
</dbReference>
<dbReference type="SUPFAM" id="SSF52743">
    <property type="entry name" value="Subtilisin-like"/>
    <property type="match status" value="1"/>
</dbReference>
<dbReference type="PROSITE" id="PS51829">
    <property type="entry name" value="P_HOMO_B"/>
    <property type="match status" value="1"/>
</dbReference>
<dbReference type="PROSITE" id="PS51892">
    <property type="entry name" value="SUBTILASE"/>
    <property type="match status" value="1"/>
</dbReference>
<dbReference type="PROSITE" id="PS00136">
    <property type="entry name" value="SUBTILASE_ASP"/>
    <property type="match status" value="1"/>
</dbReference>
<dbReference type="PROSITE" id="PS00137">
    <property type="entry name" value="SUBTILASE_HIS"/>
    <property type="match status" value="1"/>
</dbReference>
<dbReference type="PROSITE" id="PS00138">
    <property type="entry name" value="SUBTILASE_SER"/>
    <property type="match status" value="1"/>
</dbReference>
<feature type="signal peptide" evidence="3">
    <location>
        <begin position="1"/>
        <end position="27"/>
    </location>
</feature>
<feature type="propeptide" id="PRO_0000027063" evidence="3">
    <location>
        <begin position="28"/>
        <end position="110"/>
    </location>
</feature>
<feature type="chain" id="PRO_0000027064" description="Neuroendocrine convertase 1">
    <location>
        <begin position="111"/>
        <end position="752"/>
    </location>
</feature>
<feature type="domain" description="Peptidase S8" evidence="5">
    <location>
        <begin position="129"/>
        <end position="450"/>
    </location>
</feature>
<feature type="domain" description="P/Homo B" evidence="4">
    <location>
        <begin position="460"/>
        <end position="597"/>
    </location>
</feature>
<feature type="region of interest" description="Disordered" evidence="6">
    <location>
        <begin position="631"/>
        <end position="662"/>
    </location>
</feature>
<feature type="active site" description="Charge relay system" evidence="5">
    <location>
        <position position="167"/>
    </location>
</feature>
<feature type="active site" description="Charge relay system" evidence="5">
    <location>
        <position position="208"/>
    </location>
</feature>
<feature type="active site" description="Charge relay system" evidence="5">
    <location>
        <position position="382"/>
    </location>
</feature>
<feature type="glycosylation site" description="N-linked (GlcNAc...) asparagine" evidence="3">
    <location>
        <position position="173"/>
    </location>
</feature>
<feature type="glycosylation site" description="N-linked (GlcNAc...) asparagine" evidence="3">
    <location>
        <position position="401"/>
    </location>
</feature>
<feature type="glycosylation site" description="N-linked (GlcNAc...) asparagine" evidence="3">
    <location>
        <position position="645"/>
    </location>
</feature>
<feature type="disulfide bond" evidence="1">
    <location>
        <begin position="225"/>
        <end position="374"/>
    </location>
</feature>
<feature type="disulfide bond" evidence="1">
    <location>
        <begin position="317"/>
        <end position="347"/>
    </location>
</feature>
<feature type="disulfide bond" evidence="1">
    <location>
        <begin position="467"/>
        <end position="494"/>
    </location>
</feature>
<feature type="sequence conflict" description="In Ref. 2; AAA41476." evidence="7" ref="2">
    <original>T</original>
    <variation>TT</variation>
    <location>
        <position position="366"/>
    </location>
</feature>
<feature type="sequence conflict" description="In Ref. 2; AAA41476." evidence="7" ref="2">
    <original>E</original>
    <variation>A</variation>
    <location>
        <position position="514"/>
    </location>
</feature>
<name>NEC1_RAT</name>
<keyword id="KW-0106">Calcium</keyword>
<keyword id="KW-0165">Cleavage on pair of basic residues</keyword>
<keyword id="KW-0968">Cytoplasmic vesicle</keyword>
<keyword id="KW-1015">Disulfide bond</keyword>
<keyword id="KW-0325">Glycoprotein</keyword>
<keyword id="KW-0378">Hydrolase</keyword>
<keyword id="KW-0645">Protease</keyword>
<keyword id="KW-1185">Reference proteome</keyword>
<keyword id="KW-0720">Serine protease</keyword>
<keyword id="KW-0732">Signal</keyword>
<keyword id="KW-0865">Zymogen</keyword>
<sequence>MKQRGWTLQCTAFTLFCVWCALNSVKAKRQFVNEWAAEIHGGPEAASAIAEELGYDLLGQIGSLENHYLFKHKNHPRRSRRSALHITKRLSDDDRVIWAEQQYEKERRKRSVPRDSALNLFNDPMWNQQWYLQDTRMTASLPKLDLHVIPVWQKGITGKGVVITVLDDGLEWNHTDIYANYDPEASYDFNDNDHDPFPRYDPTNENKHGTRCAGEIAMQANNHKCGVGVAYNSKVGGIRMLDGIVTDAIEASSIGFNPGHVDIYSASWGPNDDGKTVEGPGRLAQKAFEYGVKQGRQGKGSIFVWASGNGGRQGDNCDCDGYTDSIYTISISSASQQGLSPWYAEKCSSTLATSYSSGDYTDQRITSADLHNDCTETHTGTSASAPLAAGIFALALEANPNLTWRDMQHLVVWTSEYDPLANNPGWKKNGAGLMVNSRFGFGLLNAKALVDLADPRTWRNVPEKKECIIKDNNFEPRALKANGEVIVEIPTRACEGQENAINSLEHVQFEATIEYSRRGDLHVTLTSAAGTSTVLLAERERDTSPNGFKNWDFMSVHTWGENPVGTWTLKVTDMSGRMQNEGRIVNWKLILHGTSSQPEHMKQPRVYTSYNTVQNDRRGVEKMVNVVEEKPTQNSLNGNLLVPKNSSSSSVEDRRDEQVQGAPSKAMLRLLQSAFSKNTPSKQSSKIPSAKLSVPYEGLYEALEKLNKPSQLEDSEDSLYSDYVDVFYNTKPYKHRDDRLLQALMDILNEKN</sequence>
<reference key="1">
    <citation type="journal article" date="1991" name="Mol. Endocrinol.">
        <title>Prohormone-converting enzymes: regulation and evaluation of function using antisense RNA.</title>
        <authorList>
            <person name="Bloomquist B.T."/>
            <person name="Eipper B.A."/>
            <person name="Mains R.E."/>
        </authorList>
    </citation>
    <scope>NUCLEOTIDE SEQUENCE [MRNA]</scope>
</reference>
<reference key="2">
    <citation type="journal article" date="1991" name="Endocrinology">
        <title>Isolation of two complementary deoxyribonucleic acid clones from a rat insulinoma cell line based on similarities to Kex2 and furin sequences and the specific localization of each transcript to endocrine and neuroendocrine tissues in rats.</title>
        <authorList>
            <person name="Hakes D.J."/>
            <person name="Birch N.P."/>
            <person name="Mezey A."/>
            <person name="Dixon J.E."/>
        </authorList>
    </citation>
    <scope>NUCLEOTIDE SEQUENCE [MRNA]</scope>
</reference>